<name>THIL_CAUVC</name>
<proteinExistence type="inferred from homology"/>
<sequence>MAPSTRSPVMHETDEEDWFAEDDAAAPAAAPPTEFDHIARLLRPLTRGDPVALDLLDDAAVLPSRPGYDLVITKDAMVAGVHFLAEEALDVVARKLLRTNLSDLAAKAAEPYGYFLAVGWPSGSDVASRETFARGLAEDGALFDISLLGGDTVTTSGPLVVSATFLGWAPQGETILRRGAKPGDRLMVSGTIGDGWLGLLAQWGEVMDADGAMLRRYRQPEPRVTLRDAMRVHAKAAADVSDGLLADSSHIAKASGCRVRVDLERLPLSPGAQAWLDQQPEQVEGRISLASGGDDYEIVCAVDPNEAWAFRVAAAAAGVKVSEIGEFVEGEGVSAYYKGRDVTPSRLGWLHG</sequence>
<comment type="function">
    <text evidence="1">Catalyzes the ATP-dependent phosphorylation of thiamine-monophosphate (TMP) to form thiamine-pyrophosphate (TPP), the active form of vitamin B1.</text>
</comment>
<comment type="catalytic activity">
    <reaction evidence="1">
        <text>thiamine phosphate + ATP = thiamine diphosphate + ADP</text>
        <dbReference type="Rhea" id="RHEA:15913"/>
        <dbReference type="ChEBI" id="CHEBI:30616"/>
        <dbReference type="ChEBI" id="CHEBI:37575"/>
        <dbReference type="ChEBI" id="CHEBI:58937"/>
        <dbReference type="ChEBI" id="CHEBI:456216"/>
        <dbReference type="EC" id="2.7.4.16"/>
    </reaction>
</comment>
<comment type="pathway">
    <text evidence="1">Cofactor biosynthesis; thiamine diphosphate biosynthesis; thiamine diphosphate from thiamine phosphate: step 1/1.</text>
</comment>
<comment type="miscellaneous">
    <text evidence="1">Reaction mechanism of ThiL seems to utilize a direct, inline transfer of the gamma-phosphate of ATP to TMP rather than a phosphorylated enzyme intermediate.</text>
</comment>
<comment type="similarity">
    <text evidence="1">Belongs to the thiamine-monophosphate kinase family.</text>
</comment>
<keyword id="KW-0067">ATP-binding</keyword>
<keyword id="KW-0418">Kinase</keyword>
<keyword id="KW-0460">Magnesium</keyword>
<keyword id="KW-0479">Metal-binding</keyword>
<keyword id="KW-0547">Nucleotide-binding</keyword>
<keyword id="KW-1185">Reference proteome</keyword>
<keyword id="KW-0784">Thiamine biosynthesis</keyword>
<keyword id="KW-0808">Transferase</keyword>
<protein>
    <recommendedName>
        <fullName evidence="1">Thiamine-monophosphate kinase</fullName>
        <shortName evidence="1">TMP kinase</shortName>
        <shortName evidence="1">Thiamine-phosphate kinase</shortName>
        <ecNumber evidence="1">2.7.4.16</ecNumber>
    </recommendedName>
</protein>
<feature type="chain" id="PRO_0000415635" description="Thiamine-monophosphate kinase">
    <location>
        <begin position="1"/>
        <end position="352"/>
    </location>
</feature>
<feature type="binding site" evidence="1">
    <location>
        <position position="58"/>
    </location>
    <ligand>
        <name>Mg(2+)</name>
        <dbReference type="ChEBI" id="CHEBI:18420"/>
        <label>3</label>
    </ligand>
</feature>
<feature type="binding site" evidence="1">
    <location>
        <position position="58"/>
    </location>
    <ligand>
        <name>Mg(2+)</name>
        <dbReference type="ChEBI" id="CHEBI:18420"/>
        <label>4</label>
    </ligand>
</feature>
<feature type="binding site" evidence="1">
    <location>
        <position position="73"/>
    </location>
    <ligand>
        <name>Mg(2+)</name>
        <dbReference type="ChEBI" id="CHEBI:18420"/>
        <label>4</label>
    </ligand>
</feature>
<feature type="binding site" evidence="1">
    <location>
        <position position="75"/>
    </location>
    <ligand>
        <name>Mg(2+)</name>
        <dbReference type="ChEBI" id="CHEBI:18420"/>
        <label>1</label>
    </ligand>
</feature>
<feature type="binding site" evidence="1">
    <location>
        <position position="75"/>
    </location>
    <ligand>
        <name>Mg(2+)</name>
        <dbReference type="ChEBI" id="CHEBI:18420"/>
        <label>2</label>
    </ligand>
</feature>
<feature type="binding site" evidence="1">
    <location>
        <position position="82"/>
    </location>
    <ligand>
        <name>substrate</name>
    </ligand>
</feature>
<feature type="binding site" evidence="1">
    <location>
        <position position="103"/>
    </location>
    <ligand>
        <name>Mg(2+)</name>
        <dbReference type="ChEBI" id="CHEBI:18420"/>
        <label>2</label>
    </ligand>
</feature>
<feature type="binding site" evidence="1">
    <location>
        <position position="103"/>
    </location>
    <ligand>
        <name>Mg(2+)</name>
        <dbReference type="ChEBI" id="CHEBI:18420"/>
        <label>3</label>
    </ligand>
</feature>
<feature type="binding site" evidence="1">
    <location>
        <position position="103"/>
    </location>
    <ligand>
        <name>Mg(2+)</name>
        <dbReference type="ChEBI" id="CHEBI:18420"/>
        <label>4</label>
    </ligand>
</feature>
<feature type="binding site" evidence="1">
    <location>
        <begin position="150"/>
        <end position="151"/>
    </location>
    <ligand>
        <name>ATP</name>
        <dbReference type="ChEBI" id="CHEBI:30616"/>
    </ligand>
</feature>
<feature type="binding site" evidence="1">
    <location>
        <position position="151"/>
    </location>
    <ligand>
        <name>Mg(2+)</name>
        <dbReference type="ChEBI" id="CHEBI:18420"/>
        <label>1</label>
    </ligand>
</feature>
<feature type="binding site" evidence="1">
    <location>
        <position position="177"/>
    </location>
    <ligand>
        <name>ATP</name>
        <dbReference type="ChEBI" id="CHEBI:30616"/>
    </ligand>
</feature>
<feature type="binding site" evidence="1">
    <location>
        <position position="239"/>
    </location>
    <ligand>
        <name>Mg(2+)</name>
        <dbReference type="ChEBI" id="CHEBI:18420"/>
        <label>3</label>
    </ligand>
</feature>
<feature type="binding site" evidence="1">
    <location>
        <position position="241"/>
    </location>
    <ligand>
        <name>ATP</name>
        <dbReference type="ChEBI" id="CHEBI:30616"/>
    </ligand>
</feature>
<feature type="binding site" evidence="1">
    <location>
        <position position="242"/>
    </location>
    <ligand>
        <name>Mg(2+)</name>
        <dbReference type="ChEBI" id="CHEBI:18420"/>
        <label>5</label>
    </ligand>
</feature>
<feature type="binding site" evidence="1">
    <location>
        <position position="294"/>
    </location>
    <ligand>
        <name>substrate</name>
    </ligand>
</feature>
<feature type="binding site" evidence="1">
    <location>
        <position position="349"/>
    </location>
    <ligand>
        <name>substrate</name>
    </ligand>
</feature>
<reference key="1">
    <citation type="journal article" date="2001" name="Proc. Natl. Acad. Sci. U.S.A.">
        <title>Complete genome sequence of Caulobacter crescentus.</title>
        <authorList>
            <person name="Nierman W.C."/>
            <person name="Feldblyum T.V."/>
            <person name="Laub M.T."/>
            <person name="Paulsen I.T."/>
            <person name="Nelson K.E."/>
            <person name="Eisen J.A."/>
            <person name="Heidelberg J.F."/>
            <person name="Alley M.R.K."/>
            <person name="Ohta N."/>
            <person name="Maddock J.R."/>
            <person name="Potocka I."/>
            <person name="Nelson W.C."/>
            <person name="Newton A."/>
            <person name="Stephens C."/>
            <person name="Phadke N.D."/>
            <person name="Ely B."/>
            <person name="DeBoy R.T."/>
            <person name="Dodson R.J."/>
            <person name="Durkin A.S."/>
            <person name="Gwinn M.L."/>
            <person name="Haft D.H."/>
            <person name="Kolonay J.F."/>
            <person name="Smit J."/>
            <person name="Craven M.B."/>
            <person name="Khouri H.M."/>
            <person name="Shetty J."/>
            <person name="Berry K.J."/>
            <person name="Utterback T.R."/>
            <person name="Tran K."/>
            <person name="Wolf A.M."/>
            <person name="Vamathevan J.J."/>
            <person name="Ermolaeva M.D."/>
            <person name="White O."/>
            <person name="Salzberg S.L."/>
            <person name="Venter J.C."/>
            <person name="Shapiro L."/>
            <person name="Fraser C.M."/>
        </authorList>
    </citation>
    <scope>NUCLEOTIDE SEQUENCE [LARGE SCALE GENOMIC DNA]</scope>
    <source>
        <strain>ATCC 19089 / CIP 103742 / CB 15</strain>
    </source>
</reference>
<organism>
    <name type="scientific">Caulobacter vibrioides (strain ATCC 19089 / CIP 103742 / CB 15)</name>
    <name type="common">Caulobacter crescentus</name>
    <dbReference type="NCBI Taxonomy" id="190650"/>
    <lineage>
        <taxon>Bacteria</taxon>
        <taxon>Pseudomonadati</taxon>
        <taxon>Pseudomonadota</taxon>
        <taxon>Alphaproteobacteria</taxon>
        <taxon>Caulobacterales</taxon>
        <taxon>Caulobacteraceae</taxon>
        <taxon>Caulobacter</taxon>
    </lineage>
</organism>
<dbReference type="EC" id="2.7.4.16" evidence="1"/>
<dbReference type="EMBL" id="AE005673">
    <property type="protein sequence ID" value="AAK23342.1"/>
    <property type="molecule type" value="Genomic_DNA"/>
</dbReference>
<dbReference type="PIR" id="B87418">
    <property type="entry name" value="B87418"/>
</dbReference>
<dbReference type="RefSeq" id="NP_420174.1">
    <property type="nucleotide sequence ID" value="NC_002696.2"/>
</dbReference>
<dbReference type="RefSeq" id="WP_010919238.1">
    <property type="nucleotide sequence ID" value="NC_002696.2"/>
</dbReference>
<dbReference type="SMR" id="Q9A8J2"/>
<dbReference type="STRING" id="190650.CC_1361"/>
<dbReference type="EnsemblBacteria" id="AAK23342">
    <property type="protein sequence ID" value="AAK23342"/>
    <property type="gene ID" value="CC_1361"/>
</dbReference>
<dbReference type="KEGG" id="ccr:CC_1361"/>
<dbReference type="PATRIC" id="fig|190650.5.peg.1391"/>
<dbReference type="eggNOG" id="COG0611">
    <property type="taxonomic scope" value="Bacteria"/>
</dbReference>
<dbReference type="HOGENOM" id="CLU_046964_3_0_5"/>
<dbReference type="BioCyc" id="CAULO:CC1361-MONOMER"/>
<dbReference type="UniPathway" id="UPA00060">
    <property type="reaction ID" value="UER00142"/>
</dbReference>
<dbReference type="Proteomes" id="UP000001816">
    <property type="component" value="Chromosome"/>
</dbReference>
<dbReference type="GO" id="GO:0005524">
    <property type="term" value="F:ATP binding"/>
    <property type="evidence" value="ECO:0007669"/>
    <property type="project" value="UniProtKB-UniRule"/>
</dbReference>
<dbReference type="GO" id="GO:0000287">
    <property type="term" value="F:magnesium ion binding"/>
    <property type="evidence" value="ECO:0007669"/>
    <property type="project" value="UniProtKB-UniRule"/>
</dbReference>
<dbReference type="GO" id="GO:0009030">
    <property type="term" value="F:thiamine-phosphate kinase activity"/>
    <property type="evidence" value="ECO:0007669"/>
    <property type="project" value="UniProtKB-UniRule"/>
</dbReference>
<dbReference type="GO" id="GO:0009228">
    <property type="term" value="P:thiamine biosynthetic process"/>
    <property type="evidence" value="ECO:0007669"/>
    <property type="project" value="UniProtKB-KW"/>
</dbReference>
<dbReference type="GO" id="GO:0009229">
    <property type="term" value="P:thiamine diphosphate biosynthetic process"/>
    <property type="evidence" value="ECO:0007669"/>
    <property type="project" value="UniProtKB-UniRule"/>
</dbReference>
<dbReference type="CDD" id="cd02194">
    <property type="entry name" value="ThiL"/>
    <property type="match status" value="1"/>
</dbReference>
<dbReference type="Gene3D" id="3.90.650.10">
    <property type="entry name" value="PurM-like C-terminal domain"/>
    <property type="match status" value="1"/>
</dbReference>
<dbReference type="Gene3D" id="3.30.1330.10">
    <property type="entry name" value="PurM-like, N-terminal domain"/>
    <property type="match status" value="1"/>
</dbReference>
<dbReference type="HAMAP" id="MF_02128">
    <property type="entry name" value="TMP_kinase"/>
    <property type="match status" value="1"/>
</dbReference>
<dbReference type="InterPro" id="IPR010918">
    <property type="entry name" value="PurM-like_C_dom"/>
</dbReference>
<dbReference type="InterPro" id="IPR036676">
    <property type="entry name" value="PurM-like_C_sf"/>
</dbReference>
<dbReference type="InterPro" id="IPR016188">
    <property type="entry name" value="PurM-like_N"/>
</dbReference>
<dbReference type="InterPro" id="IPR036921">
    <property type="entry name" value="PurM-like_N_sf"/>
</dbReference>
<dbReference type="InterPro" id="IPR006283">
    <property type="entry name" value="ThiL-like"/>
</dbReference>
<dbReference type="NCBIfam" id="TIGR01379">
    <property type="entry name" value="thiL"/>
    <property type="match status" value="1"/>
</dbReference>
<dbReference type="PANTHER" id="PTHR30270">
    <property type="entry name" value="THIAMINE-MONOPHOSPHATE KINASE"/>
    <property type="match status" value="1"/>
</dbReference>
<dbReference type="PANTHER" id="PTHR30270:SF0">
    <property type="entry name" value="THIAMINE-MONOPHOSPHATE KINASE"/>
    <property type="match status" value="1"/>
</dbReference>
<dbReference type="Pfam" id="PF00586">
    <property type="entry name" value="AIRS"/>
    <property type="match status" value="1"/>
</dbReference>
<dbReference type="Pfam" id="PF02769">
    <property type="entry name" value="AIRS_C"/>
    <property type="match status" value="1"/>
</dbReference>
<dbReference type="PIRSF" id="PIRSF005303">
    <property type="entry name" value="Thiam_monoph_kin"/>
    <property type="match status" value="1"/>
</dbReference>
<dbReference type="SUPFAM" id="SSF56042">
    <property type="entry name" value="PurM C-terminal domain-like"/>
    <property type="match status" value="1"/>
</dbReference>
<dbReference type="SUPFAM" id="SSF55326">
    <property type="entry name" value="PurM N-terminal domain-like"/>
    <property type="match status" value="1"/>
</dbReference>
<gene>
    <name evidence="1" type="primary">thiL</name>
    <name type="ordered locus">CC_1361</name>
</gene>
<evidence type="ECO:0000255" key="1">
    <source>
        <dbReference type="HAMAP-Rule" id="MF_02128"/>
    </source>
</evidence>
<accession>Q9A8J2</accession>